<comment type="function">
    <text evidence="1">This protein is involved in the repair of mismatches in DNA. It is possible that it carries out the mismatch recognition step. This protein has a weak ATPase activity.</text>
</comment>
<comment type="similarity">
    <text evidence="1">Belongs to the DNA mismatch repair MutS family.</text>
</comment>
<dbReference type="EMBL" id="CP000053">
    <property type="protein sequence ID" value="AAY61334.1"/>
    <property type="molecule type" value="Genomic_DNA"/>
</dbReference>
<dbReference type="SMR" id="Q4UM86"/>
<dbReference type="STRING" id="315456.RF_0483"/>
<dbReference type="KEGG" id="rfe:RF_0483"/>
<dbReference type="eggNOG" id="COG0249">
    <property type="taxonomic scope" value="Bacteria"/>
</dbReference>
<dbReference type="HOGENOM" id="CLU_002472_1_3_5"/>
<dbReference type="OrthoDB" id="9802448at2"/>
<dbReference type="Proteomes" id="UP000008548">
    <property type="component" value="Chromosome"/>
</dbReference>
<dbReference type="GO" id="GO:0005524">
    <property type="term" value="F:ATP binding"/>
    <property type="evidence" value="ECO:0007669"/>
    <property type="project" value="UniProtKB-UniRule"/>
</dbReference>
<dbReference type="GO" id="GO:0140664">
    <property type="term" value="F:ATP-dependent DNA damage sensor activity"/>
    <property type="evidence" value="ECO:0007669"/>
    <property type="project" value="InterPro"/>
</dbReference>
<dbReference type="GO" id="GO:0003684">
    <property type="term" value="F:damaged DNA binding"/>
    <property type="evidence" value="ECO:0007669"/>
    <property type="project" value="UniProtKB-UniRule"/>
</dbReference>
<dbReference type="GO" id="GO:0030983">
    <property type="term" value="F:mismatched DNA binding"/>
    <property type="evidence" value="ECO:0007669"/>
    <property type="project" value="InterPro"/>
</dbReference>
<dbReference type="GO" id="GO:0006298">
    <property type="term" value="P:mismatch repair"/>
    <property type="evidence" value="ECO:0007669"/>
    <property type="project" value="UniProtKB-UniRule"/>
</dbReference>
<dbReference type="CDD" id="cd03284">
    <property type="entry name" value="ABC_MutS1"/>
    <property type="match status" value="1"/>
</dbReference>
<dbReference type="FunFam" id="3.40.50.300:FF:001238">
    <property type="entry name" value="DNA mismatch repair protein"/>
    <property type="match status" value="1"/>
</dbReference>
<dbReference type="FunFam" id="3.40.1170.10:FF:000001">
    <property type="entry name" value="DNA mismatch repair protein MutS"/>
    <property type="match status" value="1"/>
</dbReference>
<dbReference type="Gene3D" id="1.10.1420.10">
    <property type="match status" value="2"/>
</dbReference>
<dbReference type="Gene3D" id="6.10.140.430">
    <property type="match status" value="1"/>
</dbReference>
<dbReference type="Gene3D" id="3.40.1170.10">
    <property type="entry name" value="DNA repair protein MutS, domain I"/>
    <property type="match status" value="1"/>
</dbReference>
<dbReference type="Gene3D" id="3.30.420.110">
    <property type="entry name" value="MutS, connector domain"/>
    <property type="match status" value="1"/>
</dbReference>
<dbReference type="Gene3D" id="3.40.50.300">
    <property type="entry name" value="P-loop containing nucleotide triphosphate hydrolases"/>
    <property type="match status" value="1"/>
</dbReference>
<dbReference type="HAMAP" id="MF_00096">
    <property type="entry name" value="MutS"/>
    <property type="match status" value="1"/>
</dbReference>
<dbReference type="InterPro" id="IPR005748">
    <property type="entry name" value="DNA_mismatch_repair_MutS"/>
</dbReference>
<dbReference type="InterPro" id="IPR007695">
    <property type="entry name" value="DNA_mismatch_repair_MutS-lik_N"/>
</dbReference>
<dbReference type="InterPro" id="IPR017261">
    <property type="entry name" value="DNA_mismatch_repair_MutS/MSH"/>
</dbReference>
<dbReference type="InterPro" id="IPR000432">
    <property type="entry name" value="DNA_mismatch_repair_MutS_C"/>
</dbReference>
<dbReference type="InterPro" id="IPR007861">
    <property type="entry name" value="DNA_mismatch_repair_MutS_clamp"/>
</dbReference>
<dbReference type="InterPro" id="IPR007696">
    <property type="entry name" value="DNA_mismatch_repair_MutS_core"/>
</dbReference>
<dbReference type="InterPro" id="IPR016151">
    <property type="entry name" value="DNA_mismatch_repair_MutS_N"/>
</dbReference>
<dbReference type="InterPro" id="IPR036187">
    <property type="entry name" value="DNA_mismatch_repair_MutS_sf"/>
</dbReference>
<dbReference type="InterPro" id="IPR007860">
    <property type="entry name" value="DNA_mmatch_repair_MutS_con_dom"/>
</dbReference>
<dbReference type="InterPro" id="IPR045076">
    <property type="entry name" value="MutS"/>
</dbReference>
<dbReference type="InterPro" id="IPR036678">
    <property type="entry name" value="MutS_con_dom_sf"/>
</dbReference>
<dbReference type="InterPro" id="IPR027417">
    <property type="entry name" value="P-loop_NTPase"/>
</dbReference>
<dbReference type="NCBIfam" id="TIGR01070">
    <property type="entry name" value="mutS1"/>
    <property type="match status" value="1"/>
</dbReference>
<dbReference type="NCBIfam" id="NF003810">
    <property type="entry name" value="PRK05399.1"/>
    <property type="match status" value="1"/>
</dbReference>
<dbReference type="PANTHER" id="PTHR11361:SF34">
    <property type="entry name" value="DNA MISMATCH REPAIR PROTEIN MSH1, MITOCHONDRIAL"/>
    <property type="match status" value="1"/>
</dbReference>
<dbReference type="PANTHER" id="PTHR11361">
    <property type="entry name" value="DNA MISMATCH REPAIR PROTEIN MUTS FAMILY MEMBER"/>
    <property type="match status" value="1"/>
</dbReference>
<dbReference type="Pfam" id="PF01624">
    <property type="entry name" value="MutS_I"/>
    <property type="match status" value="1"/>
</dbReference>
<dbReference type="Pfam" id="PF05188">
    <property type="entry name" value="MutS_II"/>
    <property type="match status" value="1"/>
</dbReference>
<dbReference type="Pfam" id="PF05192">
    <property type="entry name" value="MutS_III"/>
    <property type="match status" value="1"/>
</dbReference>
<dbReference type="Pfam" id="PF05190">
    <property type="entry name" value="MutS_IV"/>
    <property type="match status" value="1"/>
</dbReference>
<dbReference type="Pfam" id="PF00488">
    <property type="entry name" value="MutS_V"/>
    <property type="match status" value="1"/>
</dbReference>
<dbReference type="PIRSF" id="PIRSF037677">
    <property type="entry name" value="DNA_mis_repair_Msh6"/>
    <property type="match status" value="1"/>
</dbReference>
<dbReference type="SMART" id="SM00534">
    <property type="entry name" value="MUTSac"/>
    <property type="match status" value="1"/>
</dbReference>
<dbReference type="SMART" id="SM00533">
    <property type="entry name" value="MUTSd"/>
    <property type="match status" value="1"/>
</dbReference>
<dbReference type="SUPFAM" id="SSF55271">
    <property type="entry name" value="DNA repair protein MutS, domain I"/>
    <property type="match status" value="1"/>
</dbReference>
<dbReference type="SUPFAM" id="SSF53150">
    <property type="entry name" value="DNA repair protein MutS, domain II"/>
    <property type="match status" value="1"/>
</dbReference>
<dbReference type="SUPFAM" id="SSF48334">
    <property type="entry name" value="DNA repair protein MutS, domain III"/>
    <property type="match status" value="1"/>
</dbReference>
<dbReference type="SUPFAM" id="SSF52540">
    <property type="entry name" value="P-loop containing nucleoside triphosphate hydrolases"/>
    <property type="match status" value="1"/>
</dbReference>
<dbReference type="PROSITE" id="PS00486">
    <property type="entry name" value="DNA_MISMATCH_REPAIR_2"/>
    <property type="match status" value="1"/>
</dbReference>
<evidence type="ECO:0000255" key="1">
    <source>
        <dbReference type="HAMAP-Rule" id="MF_00096"/>
    </source>
</evidence>
<keyword id="KW-0067">ATP-binding</keyword>
<keyword id="KW-0227">DNA damage</keyword>
<keyword id="KW-0234">DNA repair</keyword>
<keyword id="KW-0238">DNA-binding</keyword>
<keyword id="KW-0547">Nucleotide-binding</keyword>
<sequence length="886" mass="100023">MNLQEFKQKYNYDVATKMMQQYLDIKFAHLDCLLLFRMGDFYEMFYEDAILASNVLGIALTKRGKNGEEEIAMCGVPYHALENYLTKLIEENYKVAICDQLETPEEAKNRGGYKAVVTRDVTRIITPGTIIEENLIASAEPNYLASLVITKNKETASLCYVDLSTSEIFVVNVPEAEILNELARLKPREILLSENLRSSNLADSIFKQLNFRITYQVDSFFAINKCEKIILDFYKMKDIKGIGEISSSQICAIGSILEYLSLTQKQNIPHLPIPRIINFHSYMTIDFATRRNLEIVTNSQGTLKGSLLNTLNHTVTKQGGRLLYNFLSSPLTNIAKINHRLNITEFFYSNLEIVKRIRELLKKTSDIERCLTRITMNRSSGRDLLSIKYTLEAATIIKGVFFDAYGFNLPDFIEKIIKPLSGDAELYNLIDESIREDAPNNLNDGGIIKHEYHPKVAQLHDLINNGKLHIEKLKDQYCKETGIDSLKISHNNVIGLFIDITAKNVNKILDPKFIHRQTTVNSVRYTTTELQKLESELANAKTLVISLEKELYADICNQVIEKASYLRMLASSLSGLDVFCNFAYIADEYDYVKPEFTDDLSFDIVKGRHPVVEKALKRESKSFVYNDCHLSEFERIWLITGPNMAGKSTFLRQNAIIAIIAQIGSFVPAKSAKIGVVDKIFSRIGAADDLIRGQSTFMAEMLETSAILAQSTKNSLIILDEVGRGTSTYDGVSIAWSVLEYIHDKLKCRCLFATHYHELTVMSNFLPALQNYTIAIEESGKDILFLHNIISGAADRSYGIHVAALAGLPASVINRAEQILLKFEKTSTGKGKNILSTESNNLSLFNLEPNKTTISSKLDEQFRTIAPDKLSPKEALELIYELKKLV</sequence>
<organism>
    <name type="scientific">Rickettsia felis (strain ATCC VR-1525 / URRWXCal2)</name>
    <name type="common">Rickettsia azadi</name>
    <dbReference type="NCBI Taxonomy" id="315456"/>
    <lineage>
        <taxon>Bacteria</taxon>
        <taxon>Pseudomonadati</taxon>
        <taxon>Pseudomonadota</taxon>
        <taxon>Alphaproteobacteria</taxon>
        <taxon>Rickettsiales</taxon>
        <taxon>Rickettsiaceae</taxon>
        <taxon>Rickettsieae</taxon>
        <taxon>Rickettsia</taxon>
        <taxon>spotted fever group</taxon>
    </lineage>
</organism>
<feature type="chain" id="PRO_0000224399" description="DNA mismatch repair protein MutS">
    <location>
        <begin position="1"/>
        <end position="886"/>
    </location>
</feature>
<feature type="binding site" evidence="1">
    <location>
        <begin position="641"/>
        <end position="648"/>
    </location>
    <ligand>
        <name>ATP</name>
        <dbReference type="ChEBI" id="CHEBI:30616"/>
    </ligand>
</feature>
<protein>
    <recommendedName>
        <fullName evidence="1">DNA mismatch repair protein MutS</fullName>
    </recommendedName>
</protein>
<gene>
    <name evidence="1" type="primary">mutS</name>
    <name type="ordered locus">RF_0483</name>
</gene>
<proteinExistence type="inferred from homology"/>
<reference key="1">
    <citation type="journal article" date="2005" name="PLoS Biol.">
        <title>The genome sequence of Rickettsia felis identifies the first putative conjugative plasmid in an obligate intracellular parasite.</title>
        <authorList>
            <person name="Ogata H."/>
            <person name="Renesto P."/>
            <person name="Audic S."/>
            <person name="Robert C."/>
            <person name="Blanc G."/>
            <person name="Fournier P.-E."/>
            <person name="Parinello H."/>
            <person name="Claverie J.-M."/>
            <person name="Raoult D."/>
        </authorList>
    </citation>
    <scope>NUCLEOTIDE SEQUENCE [LARGE SCALE GENOMIC DNA]</scope>
    <source>
        <strain>ATCC VR-1525 / URRWXCal2</strain>
    </source>
</reference>
<name>MUTS_RICFE</name>
<accession>Q4UM86</accession>